<protein>
    <recommendedName>
        <fullName>Non-structural protein 1</fullName>
        <shortName>NS1</shortName>
    </recommendedName>
    <alternativeName>
        <fullName>NS1C</fullName>
    </alternativeName>
</protein>
<gene>
    <name type="primary">NS</name>
</gene>
<organism>
    <name type="scientific">Influenza C virus (strain C/Mississippi/1980)</name>
    <dbReference type="NCBI Taxonomy" id="203229"/>
    <lineage>
        <taxon>Viruses</taxon>
        <taxon>Riboviria</taxon>
        <taxon>Orthornavirae</taxon>
        <taxon>Negarnaviricota</taxon>
        <taxon>Polyploviricotina</taxon>
        <taxon>Insthoviricetes</taxon>
        <taxon>Articulavirales</taxon>
        <taxon>Orthomyxoviridae</taxon>
        <taxon>Gammainfluenzavirus</taxon>
        <taxon>Gammainfluenzavirus influenzae</taxon>
        <taxon>Influenza C virus</taxon>
    </lineage>
</organism>
<dbReference type="EMBL" id="D00032">
    <property type="protein sequence ID" value="BAA24040.1"/>
    <property type="status" value="ALT_FRAME"/>
    <property type="molecule type" value="Genomic_RNA"/>
</dbReference>
<dbReference type="EMBL" id="M31007">
    <property type="protein sequence ID" value="AAA43807.1"/>
    <property type="status" value="ALT_FRAME"/>
    <property type="molecule type" value="Genomic_RNA"/>
</dbReference>
<dbReference type="GO" id="GO:0030430">
    <property type="term" value="C:host cell cytoplasm"/>
    <property type="evidence" value="ECO:0007669"/>
    <property type="project" value="UniProtKB-SubCell"/>
</dbReference>
<dbReference type="GO" id="GO:0042025">
    <property type="term" value="C:host cell nucleus"/>
    <property type="evidence" value="ECO:0007669"/>
    <property type="project" value="UniProtKB-SubCell"/>
</dbReference>
<dbReference type="InterPro" id="IPR005187">
    <property type="entry name" value="Flu_C_NS1"/>
</dbReference>
<dbReference type="InterPro" id="IPR005188">
    <property type="entry name" value="Flu_C_NS2"/>
</dbReference>
<dbReference type="Pfam" id="PF03506">
    <property type="entry name" value="Flu_C_NS1"/>
    <property type="match status" value="1"/>
</dbReference>
<dbReference type="Pfam" id="PF03555">
    <property type="entry name" value="Flu_C_NS2"/>
    <property type="match status" value="1"/>
</dbReference>
<keyword id="KW-0025">Alternative splicing</keyword>
<keyword id="KW-1035">Host cytoplasm</keyword>
<keyword id="KW-1048">Host nucleus</keyword>
<feature type="chain" id="PRO_0000039180" description="Non-structural protein 1">
    <location>
        <begin position="1"/>
        <end position="241"/>
    </location>
</feature>
<feature type="non-terminal residue">
    <location>
        <position position="1"/>
    </location>
</feature>
<reference key="1">
    <citation type="journal article" date="1986" name="Virology">
        <title>Epidemiology of influenza C virus in man: multiple evolutionary lineages and low rate of change.</title>
        <authorList>
            <person name="Buonagurio D.A."/>
            <person name="Nakada S."/>
            <person name="Fitch W.M."/>
            <person name="Palese P."/>
        </authorList>
    </citation>
    <scope>NUCLEOTIDE SEQUENCE [GENOMIC RNA]</scope>
</reference>
<accession>P0C140</accession>
<accession>P06824</accession>
<accession>Q67403</accession>
<accession>Q84082</accession>
<accession>Q89771</accession>
<sequence>VKSTNLMAFVATKMLERQEDLDTCTEMQVEKMKTSTKARLKTESSFAPRTWEDAIKDGELLFNGTILQAESPTMTPASVEMKGKKLPIDFAPSNIAPIGQNPIYLSPCIPNFDGNVWEATMYHHRGATLTKTMNCNCFQRTIWCHPNPSRMRLSYAFVLYCRNTKKICGYLIARQVAGIETGIRKCFRCIKSGFVMATDEISLTILQSIKSGAQLDPYWGNETPDIDKTEAYMLSLREAGP</sequence>
<evidence type="ECO:0000250" key="1"/>
<evidence type="ECO:0000305" key="2"/>
<organismHost>
    <name type="scientific">Homo sapiens</name>
    <name type="common">Human</name>
    <dbReference type="NCBI Taxonomy" id="9606"/>
</organismHost>
<organismHost>
    <name type="scientific">Sus scrofa</name>
    <name type="common">Pig</name>
    <dbReference type="NCBI Taxonomy" id="9823"/>
</organismHost>
<name>NS1_INCMI</name>
<proteinExistence type="inferred from homology"/>
<comment type="function">
    <text evidence="1">Suppresses the RNA silencing-based antiviral response in Drosophila cells.</text>
</comment>
<comment type="subcellular location">
    <subcellularLocation>
        <location evidence="1">Host cytoplasm</location>
    </subcellularLocation>
    <subcellularLocation>
        <location evidence="1">Host nucleus</location>
    </subcellularLocation>
</comment>
<comment type="alternative products">
    <event type="alternative splicing"/>
    <isoform>
        <id>P0C140-1</id>
        <name>NS1</name>
        <sequence type="displayed"/>
    </isoform>
    <isoform>
        <id>Q67402-1</id>
        <name>NEP</name>
        <name>NS2</name>
        <sequence type="external"/>
    </isoform>
</comment>
<comment type="sequence caution" evidence="2">
    <conflict type="frameshift">
        <sequence resource="EMBL-CDS" id="AAA43807"/>
    </conflict>
</comment>
<comment type="sequence caution" evidence="2">
    <conflict type="frameshift">
        <sequence resource="EMBL-CDS" id="BAA24040"/>
    </conflict>
</comment>